<proteinExistence type="evidence at protein level"/>
<gene>
    <name type="primary">HIP1R</name>
    <name type="synonym">HIP12</name>
    <name type="synonym">KIAA0655</name>
</gene>
<organism>
    <name type="scientific">Homo sapiens</name>
    <name type="common">Human</name>
    <dbReference type="NCBI Taxonomy" id="9606"/>
    <lineage>
        <taxon>Eukaryota</taxon>
        <taxon>Metazoa</taxon>
        <taxon>Chordata</taxon>
        <taxon>Craniata</taxon>
        <taxon>Vertebrata</taxon>
        <taxon>Euteleostomi</taxon>
        <taxon>Mammalia</taxon>
        <taxon>Eutheria</taxon>
        <taxon>Euarchontoglires</taxon>
        <taxon>Primates</taxon>
        <taxon>Haplorrhini</taxon>
        <taxon>Catarrhini</taxon>
        <taxon>Hominidae</taxon>
        <taxon>Homo</taxon>
    </lineage>
</organism>
<sequence length="1068" mass="119388">MNSIKNVPARVLSRRPGHSLEAEREQFDKTQAISISKAINTQEAPVKEKHARRIILGTHHEKGAFTFWSYAIGLPLPSSSILSWKFCHVLHKVLRDGHPNVLHDCQRYRSNIREIGDLWGHLHDRYGQLVNVYTKLLLTKISFHLKHPQFPAGLEVTDEVLEKAAGTDVNNIFQLTVEMFDYMDCELKLSESVFRQLNTAIAVSQMSSGQCRLAPLIQVIQDCSHLYHYTVKLLFKLHSCLPADTLQGHRDRFHEQFHSLRNFFRRASDMLYFKRLIQIPRLPEGPPNFLRASALAEHIKPVVVIPEEAPEDEEPENLIEISTGPPAGEPVVVADLFDQTFGPPNGSVKDDRDLQIESLKREVEMLRSELEKIKLEAQRYIAQLKSQVNALEGELEEQRKQKQKALVDNEQLRHELAQLRAAQLEGERSQGLREEAERKASATEARYNKLKEKHSELVHVHAELLRKNADTAKQLTVTQQSQEEVARVKEQLAFQVEQVKRESELKLEEKSDQLEKLKRELEAKAGELARAQEALSHTEQSKSELSSRLDTLSAEKDALSGAVRQREADLLAAQSLVRETEAALSREQQRSSQEQGELQGRLAERESQEQGLRQRLLDEQFAVLRGAAAEAAGILQDAVSKLDDPLHLRCTSSPDYLVSRAQEALDAVSTLEEGHAQYLTSLADASALVAALTRFSHLAADTIINGGATSHLAPTDPADRLIDTCRECGARALELMGQLQDQQALRHMQASLVRTPLQGILQLGQELKPKSLDVRQEELGAVVDKEMAATSAAIEDAVRRIEDMMNQARHASSGVKLEVNERILNSCTDLMKAIRLLVTTSTSLQKEIVESGRGAATQQEFYAKNSRWTEGLISASKAVGWGATQLVEAADKVVLHTGKYEELIVCSHEIAASTAQLVAASKVKANKHSPHLSRLQECSRTVNERAANVVASTKSGQEQIEDRDTMDFSGLSLIKLKKQEMETQVRVLELEKTLEAERMRLGELRKQHYVLAGASGSPGEEVAIRPSTAPRSVTTKKPPLAQKPSVAPRQDHQLDKKDGIYPAQLVNY</sequence>
<name>HIP1R_HUMAN</name>
<dbReference type="EMBL" id="AB014555">
    <property type="protein sequence ID" value="BAA31630.1"/>
    <property type="status" value="ALT_INIT"/>
    <property type="molecule type" value="mRNA"/>
</dbReference>
<dbReference type="EMBL" id="AC027290">
    <property type="status" value="NOT_ANNOTATED_CDS"/>
    <property type="molecule type" value="Genomic_DNA"/>
</dbReference>
<dbReference type="EMBL" id="BC067085">
    <property type="protein sequence ID" value="AAH67085.1"/>
    <property type="molecule type" value="mRNA"/>
</dbReference>
<dbReference type="EMBL" id="AB013384">
    <property type="protein sequence ID" value="BAA33713.1"/>
    <property type="molecule type" value="mRNA"/>
</dbReference>
<dbReference type="CCDS" id="CCDS31922.1">
    <molecule id="O75146-1"/>
</dbReference>
<dbReference type="RefSeq" id="NP_001290026.1">
    <molecule id="O75146-2"/>
    <property type="nucleotide sequence ID" value="NM_001303097.2"/>
</dbReference>
<dbReference type="RefSeq" id="NP_003950.1">
    <molecule id="O75146-1"/>
    <property type="nucleotide sequence ID" value="NM_003959.3"/>
</dbReference>
<dbReference type="PDB" id="1R0D">
    <property type="method" value="X-ray"/>
    <property type="resolution" value="1.90 A"/>
    <property type="chains" value="A/B/D/E/F/G/H/I=771-971"/>
</dbReference>
<dbReference type="PDBsum" id="1R0D"/>
<dbReference type="SMR" id="O75146"/>
<dbReference type="BioGRID" id="114493">
    <property type="interactions" value="180"/>
</dbReference>
<dbReference type="CORUM" id="O75146"/>
<dbReference type="DIP" id="DIP-17042N"/>
<dbReference type="FunCoup" id="O75146">
    <property type="interactions" value="940"/>
</dbReference>
<dbReference type="IntAct" id="O75146">
    <property type="interactions" value="95"/>
</dbReference>
<dbReference type="MINT" id="O75146"/>
<dbReference type="STRING" id="9606.ENSP00000253083"/>
<dbReference type="GlyCosmos" id="O75146">
    <property type="glycosylation" value="2 sites, 2 glycans"/>
</dbReference>
<dbReference type="GlyGen" id="O75146">
    <property type="glycosylation" value="2 sites, 2 O-linked glycans (2 sites)"/>
</dbReference>
<dbReference type="iPTMnet" id="O75146"/>
<dbReference type="MetOSite" id="O75146"/>
<dbReference type="PhosphoSitePlus" id="O75146"/>
<dbReference type="SwissPalm" id="O75146"/>
<dbReference type="BioMuta" id="HIP1R"/>
<dbReference type="jPOST" id="O75146"/>
<dbReference type="MassIVE" id="O75146"/>
<dbReference type="PaxDb" id="9606-ENSP00000253083"/>
<dbReference type="PeptideAtlas" id="O75146"/>
<dbReference type="ProteomicsDB" id="49810">
    <molecule id="O75146-1"/>
</dbReference>
<dbReference type="Pumba" id="O75146"/>
<dbReference type="Antibodypedia" id="31710">
    <property type="antibodies" value="298 antibodies from 33 providers"/>
</dbReference>
<dbReference type="DNASU" id="9026"/>
<dbReference type="Ensembl" id="ENST00000253083.9">
    <molecule id="O75146-1"/>
    <property type="protein sequence ID" value="ENSP00000253083.4"/>
    <property type="gene ID" value="ENSG00000130787.14"/>
</dbReference>
<dbReference type="GeneID" id="9026"/>
<dbReference type="KEGG" id="hsa:9026"/>
<dbReference type="MANE-Select" id="ENST00000253083.9">
    <property type="protein sequence ID" value="ENSP00000253083.4"/>
    <property type="RefSeq nucleotide sequence ID" value="NM_003959.3"/>
    <property type="RefSeq protein sequence ID" value="NP_003950.1"/>
</dbReference>
<dbReference type="UCSC" id="uc001udj.2">
    <molecule id="O75146-1"/>
    <property type="organism name" value="human"/>
</dbReference>
<dbReference type="AGR" id="HGNC:18415"/>
<dbReference type="CTD" id="9026"/>
<dbReference type="DisGeNET" id="9026"/>
<dbReference type="GeneCards" id="HIP1R"/>
<dbReference type="HGNC" id="HGNC:18415">
    <property type="gene designation" value="HIP1R"/>
</dbReference>
<dbReference type="HPA" id="ENSG00000130787">
    <property type="expression patterns" value="Low tissue specificity"/>
</dbReference>
<dbReference type="MIM" id="605613">
    <property type="type" value="gene"/>
</dbReference>
<dbReference type="neXtProt" id="NX_O75146"/>
<dbReference type="OpenTargets" id="ENSG00000130787"/>
<dbReference type="PharmGKB" id="PA128394543"/>
<dbReference type="VEuPathDB" id="HostDB:ENSG00000130787"/>
<dbReference type="eggNOG" id="KOG0980">
    <property type="taxonomic scope" value="Eukaryota"/>
</dbReference>
<dbReference type="GeneTree" id="ENSGT00940000153594"/>
<dbReference type="HOGENOM" id="CLU_006034_0_0_1"/>
<dbReference type="InParanoid" id="O75146"/>
<dbReference type="OMA" id="FQMSVEM"/>
<dbReference type="OrthoDB" id="8178130at2759"/>
<dbReference type="PAN-GO" id="O75146">
    <property type="GO annotations" value="11 GO annotations based on evolutionary models"/>
</dbReference>
<dbReference type="PhylomeDB" id="O75146"/>
<dbReference type="TreeFam" id="TF316860"/>
<dbReference type="PathwayCommons" id="O75146"/>
<dbReference type="Reactome" id="R-HSA-432722">
    <property type="pathway name" value="Golgi Associated Vesicle Biogenesis"/>
</dbReference>
<dbReference type="Reactome" id="R-HSA-8856828">
    <property type="pathway name" value="Clathrin-mediated endocytosis"/>
</dbReference>
<dbReference type="SignaLink" id="O75146"/>
<dbReference type="SIGNOR" id="O75146"/>
<dbReference type="BioGRID-ORCS" id="9026">
    <property type="hits" value="28 hits in 1154 CRISPR screens"/>
</dbReference>
<dbReference type="CD-CODE" id="FB4E32DD">
    <property type="entry name" value="Presynaptic clusters and postsynaptic densities"/>
</dbReference>
<dbReference type="ChiTaRS" id="HIP1R">
    <property type="organism name" value="human"/>
</dbReference>
<dbReference type="EvolutionaryTrace" id="O75146"/>
<dbReference type="GeneWiki" id="HIP1R"/>
<dbReference type="GenomeRNAi" id="9026"/>
<dbReference type="Pharos" id="O75146">
    <property type="development level" value="Tbio"/>
</dbReference>
<dbReference type="PRO" id="PR:O75146"/>
<dbReference type="Proteomes" id="UP000005640">
    <property type="component" value="Chromosome 12"/>
</dbReference>
<dbReference type="RNAct" id="O75146">
    <property type="molecule type" value="protein"/>
</dbReference>
<dbReference type="Bgee" id="ENSG00000130787">
    <property type="expression patterns" value="Expressed in C1 segment of cervical spinal cord and 186 other cell types or tissues"/>
</dbReference>
<dbReference type="ExpressionAtlas" id="O75146">
    <property type="expression patterns" value="baseline and differential"/>
</dbReference>
<dbReference type="GO" id="GO:0016324">
    <property type="term" value="C:apical plasma membrane"/>
    <property type="evidence" value="ECO:0007669"/>
    <property type="project" value="Ensembl"/>
</dbReference>
<dbReference type="GO" id="GO:0005905">
    <property type="term" value="C:clathrin-coated pit"/>
    <property type="evidence" value="ECO:0007669"/>
    <property type="project" value="Ensembl"/>
</dbReference>
<dbReference type="GO" id="GO:0030136">
    <property type="term" value="C:clathrin-coated vesicle"/>
    <property type="evidence" value="ECO:0000314"/>
    <property type="project" value="UniProtKB"/>
</dbReference>
<dbReference type="GO" id="GO:0030665">
    <property type="term" value="C:clathrin-coated vesicle membrane"/>
    <property type="evidence" value="ECO:0007669"/>
    <property type="project" value="UniProtKB-SubCell"/>
</dbReference>
<dbReference type="GO" id="GO:0030864">
    <property type="term" value="C:cortical actin cytoskeleton"/>
    <property type="evidence" value="ECO:0000318"/>
    <property type="project" value="GO_Central"/>
</dbReference>
<dbReference type="GO" id="GO:0005829">
    <property type="term" value="C:cytosol"/>
    <property type="evidence" value="ECO:0000314"/>
    <property type="project" value="HPA"/>
</dbReference>
<dbReference type="GO" id="GO:0032839">
    <property type="term" value="C:dendrite cytoplasm"/>
    <property type="evidence" value="ECO:0000250"/>
    <property type="project" value="ParkinsonsUK-UCL"/>
</dbReference>
<dbReference type="GO" id="GO:0043197">
    <property type="term" value="C:dendritic spine"/>
    <property type="evidence" value="ECO:0000250"/>
    <property type="project" value="ParkinsonsUK-UCL"/>
</dbReference>
<dbReference type="GO" id="GO:0098978">
    <property type="term" value="C:glutamatergic synapse"/>
    <property type="evidence" value="ECO:0007669"/>
    <property type="project" value="Ensembl"/>
</dbReference>
<dbReference type="GO" id="GO:0043231">
    <property type="term" value="C:intracellular membrane-bounded organelle"/>
    <property type="evidence" value="ECO:0000314"/>
    <property type="project" value="HPA"/>
</dbReference>
<dbReference type="GO" id="GO:0005739">
    <property type="term" value="C:mitochondrion"/>
    <property type="evidence" value="ECO:0007669"/>
    <property type="project" value="GOC"/>
</dbReference>
<dbReference type="GO" id="GO:0043025">
    <property type="term" value="C:neuronal cell body"/>
    <property type="evidence" value="ECO:0000250"/>
    <property type="project" value="ParkinsonsUK-UCL"/>
</dbReference>
<dbReference type="GO" id="GO:0048471">
    <property type="term" value="C:perinuclear region of cytoplasm"/>
    <property type="evidence" value="ECO:0007669"/>
    <property type="project" value="UniProtKB-SubCell"/>
</dbReference>
<dbReference type="GO" id="GO:0005886">
    <property type="term" value="C:plasma membrane"/>
    <property type="evidence" value="ECO:0000314"/>
    <property type="project" value="HPA"/>
</dbReference>
<dbReference type="GO" id="GO:0014069">
    <property type="term" value="C:postsynaptic density"/>
    <property type="evidence" value="ECO:0000250"/>
    <property type="project" value="ParkinsonsUK-UCL"/>
</dbReference>
<dbReference type="GO" id="GO:0098843">
    <property type="term" value="C:postsynaptic endocytic zone"/>
    <property type="evidence" value="ECO:0007669"/>
    <property type="project" value="Ensembl"/>
</dbReference>
<dbReference type="GO" id="GO:0032587">
    <property type="term" value="C:ruffle membrane"/>
    <property type="evidence" value="ECO:0000314"/>
    <property type="project" value="ParkinsonsUK-UCL"/>
</dbReference>
<dbReference type="GO" id="GO:0097060">
    <property type="term" value="C:synaptic membrane"/>
    <property type="evidence" value="ECO:0000250"/>
    <property type="project" value="ParkinsonsUK-UCL"/>
</dbReference>
<dbReference type="GO" id="GO:0051015">
    <property type="term" value="F:actin filament binding"/>
    <property type="evidence" value="ECO:0000314"/>
    <property type="project" value="ParkinsonsUK-UCL"/>
</dbReference>
<dbReference type="GO" id="GO:0035615">
    <property type="term" value="F:clathrin adaptor activity"/>
    <property type="evidence" value="ECO:0000318"/>
    <property type="project" value="GO_Central"/>
</dbReference>
<dbReference type="GO" id="GO:0030276">
    <property type="term" value="F:clathrin binding"/>
    <property type="evidence" value="ECO:0000314"/>
    <property type="project" value="ParkinsonsUK-UCL"/>
</dbReference>
<dbReference type="GO" id="GO:0032051">
    <property type="term" value="F:clathrin light chain binding"/>
    <property type="evidence" value="ECO:0000318"/>
    <property type="project" value="GO_Central"/>
</dbReference>
<dbReference type="GO" id="GO:0042802">
    <property type="term" value="F:identical protein binding"/>
    <property type="evidence" value="ECO:0000353"/>
    <property type="project" value="IntAct"/>
</dbReference>
<dbReference type="GO" id="GO:0035091">
    <property type="term" value="F:phosphatidylinositol binding"/>
    <property type="evidence" value="ECO:0000314"/>
    <property type="project" value="UniProtKB"/>
</dbReference>
<dbReference type="GO" id="GO:0005547">
    <property type="term" value="F:phosphatidylinositol-3,4,5-trisphosphate binding"/>
    <property type="evidence" value="ECO:0000314"/>
    <property type="project" value="ParkinsonsUK-UCL"/>
</dbReference>
<dbReference type="GO" id="GO:0043325">
    <property type="term" value="F:phosphatidylinositol-3,4-bisphosphate binding"/>
    <property type="evidence" value="ECO:0000314"/>
    <property type="project" value="ParkinsonsUK-UCL"/>
</dbReference>
<dbReference type="GO" id="GO:0080025">
    <property type="term" value="F:phosphatidylinositol-3,5-bisphosphate binding"/>
    <property type="evidence" value="ECO:0000314"/>
    <property type="project" value="ParkinsonsUK-UCL"/>
</dbReference>
<dbReference type="GO" id="GO:0005546">
    <property type="term" value="F:phosphatidylinositol-4,5-bisphosphate binding"/>
    <property type="evidence" value="ECO:0000314"/>
    <property type="project" value="ParkinsonsUK-UCL"/>
</dbReference>
<dbReference type="GO" id="GO:0046982">
    <property type="term" value="F:protein heterodimerization activity"/>
    <property type="evidence" value="ECO:0007669"/>
    <property type="project" value="Ensembl"/>
</dbReference>
<dbReference type="GO" id="GO:0042803">
    <property type="term" value="F:protein homodimerization activity"/>
    <property type="evidence" value="ECO:0000353"/>
    <property type="project" value="ParkinsonsUK-UCL"/>
</dbReference>
<dbReference type="GO" id="GO:0017124">
    <property type="term" value="F:SH3 domain binding"/>
    <property type="evidence" value="ECO:0007669"/>
    <property type="project" value="Ensembl"/>
</dbReference>
<dbReference type="GO" id="GO:0007015">
    <property type="term" value="P:actin filament organization"/>
    <property type="evidence" value="ECO:0000318"/>
    <property type="project" value="GO_Central"/>
</dbReference>
<dbReference type="GO" id="GO:0048268">
    <property type="term" value="P:clathrin coat assembly"/>
    <property type="evidence" value="ECO:0000318"/>
    <property type="project" value="GO_Central"/>
</dbReference>
<dbReference type="GO" id="GO:0055123">
    <property type="term" value="P:digestive system development"/>
    <property type="evidence" value="ECO:0007669"/>
    <property type="project" value="Ensembl"/>
</dbReference>
<dbReference type="GO" id="GO:0006897">
    <property type="term" value="P:endocytosis"/>
    <property type="evidence" value="ECO:0000318"/>
    <property type="project" value="GO_Central"/>
</dbReference>
<dbReference type="GO" id="GO:0097193">
    <property type="term" value="P:intrinsic apoptotic signaling pathway"/>
    <property type="evidence" value="ECO:0000316"/>
    <property type="project" value="ParkinsonsUK-UCL"/>
</dbReference>
<dbReference type="GO" id="GO:0030837">
    <property type="term" value="P:negative regulation of actin filament polymerization"/>
    <property type="evidence" value="ECO:0000315"/>
    <property type="project" value="ParkinsonsUK-UCL"/>
</dbReference>
<dbReference type="GO" id="GO:0043066">
    <property type="term" value="P:negative regulation of apoptotic process"/>
    <property type="evidence" value="ECO:0007669"/>
    <property type="project" value="Ensembl"/>
</dbReference>
<dbReference type="GO" id="GO:0034316">
    <property type="term" value="P:negative regulation of Arp2/3 complex-mediated actin nucleation"/>
    <property type="evidence" value="ECO:0007669"/>
    <property type="project" value="Ensembl"/>
</dbReference>
<dbReference type="GO" id="GO:1905445">
    <property type="term" value="P:positive regulation of clathrin coat assembly"/>
    <property type="evidence" value="ECO:0007669"/>
    <property type="project" value="Ensembl"/>
</dbReference>
<dbReference type="GO" id="GO:0045742">
    <property type="term" value="P:positive regulation of epidermal growth factor receptor signaling pathway"/>
    <property type="evidence" value="ECO:0000315"/>
    <property type="project" value="ParkinsonsUK-UCL"/>
</dbReference>
<dbReference type="GO" id="GO:1901030">
    <property type="term" value="P:positive regulation of mitochondrial outer membrane permeabilization involved in apoptotic signaling pathway"/>
    <property type="evidence" value="ECO:0000316"/>
    <property type="project" value="ParkinsonsUK-UCL"/>
</dbReference>
<dbReference type="GO" id="GO:2000588">
    <property type="term" value="P:positive regulation of platelet-derived growth factor receptor-beta signaling pathway"/>
    <property type="evidence" value="ECO:0000315"/>
    <property type="project" value="ParkinsonsUK-UCL"/>
</dbReference>
<dbReference type="GO" id="GO:0099173">
    <property type="term" value="P:postsynapse organization"/>
    <property type="evidence" value="ECO:0007669"/>
    <property type="project" value="Ensembl"/>
</dbReference>
<dbReference type="GO" id="GO:0050821">
    <property type="term" value="P:protein stabilization"/>
    <property type="evidence" value="ECO:0000314"/>
    <property type="project" value="ParkinsonsUK-UCL"/>
</dbReference>
<dbReference type="GO" id="GO:0006898">
    <property type="term" value="P:receptor-mediated endocytosis"/>
    <property type="evidence" value="ECO:0000315"/>
    <property type="project" value="UniProtKB"/>
</dbReference>
<dbReference type="GO" id="GO:0032956">
    <property type="term" value="P:regulation of actin cytoskeleton organization"/>
    <property type="evidence" value="ECO:0000315"/>
    <property type="project" value="ParkinsonsUK-UCL"/>
</dbReference>
<dbReference type="GO" id="GO:0042981">
    <property type="term" value="P:regulation of apoptotic process"/>
    <property type="evidence" value="ECO:0000318"/>
    <property type="project" value="GO_Central"/>
</dbReference>
<dbReference type="GO" id="GO:2000369">
    <property type="term" value="P:regulation of clathrin-dependent endocytosis"/>
    <property type="evidence" value="ECO:0000303"/>
    <property type="project" value="ParkinsonsUK-UCL"/>
</dbReference>
<dbReference type="GO" id="GO:0030100">
    <property type="term" value="P:regulation of endocytosis"/>
    <property type="evidence" value="ECO:0000315"/>
    <property type="project" value="ParkinsonsUK-UCL"/>
</dbReference>
<dbReference type="GO" id="GO:0060453">
    <property type="term" value="P:regulation of gastric acid secretion"/>
    <property type="evidence" value="ECO:0007669"/>
    <property type="project" value="Ensembl"/>
</dbReference>
<dbReference type="CDD" id="cd17014">
    <property type="entry name" value="ANTH_N_HIP1R"/>
    <property type="match status" value="1"/>
</dbReference>
<dbReference type="FunFam" id="1.20.1410.10:FF:000002">
    <property type="entry name" value="Huntingtin interacting protein 1"/>
    <property type="match status" value="1"/>
</dbReference>
<dbReference type="FunFam" id="1.20.5.1700:FF:000002">
    <property type="entry name" value="Huntingtin interacting protein 1"/>
    <property type="match status" value="1"/>
</dbReference>
<dbReference type="FunFam" id="1.25.40.90:FF:000012">
    <property type="entry name" value="Huntingtin interacting protein 1-related"/>
    <property type="match status" value="1"/>
</dbReference>
<dbReference type="Gene3D" id="1.20.5.1700">
    <property type="match status" value="1"/>
</dbReference>
<dbReference type="Gene3D" id="1.25.40.90">
    <property type="match status" value="1"/>
</dbReference>
<dbReference type="Gene3D" id="6.10.250.920">
    <property type="match status" value="1"/>
</dbReference>
<dbReference type="Gene3D" id="1.20.1410.10">
    <property type="entry name" value="I/LWEQ domain"/>
    <property type="match status" value="1"/>
</dbReference>
<dbReference type="InterPro" id="IPR011417">
    <property type="entry name" value="ANTH_dom"/>
</dbReference>
<dbReference type="InterPro" id="IPR013809">
    <property type="entry name" value="ENTH"/>
</dbReference>
<dbReference type="InterPro" id="IPR008942">
    <property type="entry name" value="ENTH_VHS"/>
</dbReference>
<dbReference type="InterPro" id="IPR032422">
    <property type="entry name" value="HIP1_clath-bd"/>
</dbReference>
<dbReference type="InterPro" id="IPR035964">
    <property type="entry name" value="I/LWEQ_dom_sf"/>
</dbReference>
<dbReference type="InterPro" id="IPR002558">
    <property type="entry name" value="ILWEQ_dom"/>
</dbReference>
<dbReference type="InterPro" id="IPR030224">
    <property type="entry name" value="Sla2_fam"/>
</dbReference>
<dbReference type="PANTHER" id="PTHR10407">
    <property type="entry name" value="HUNTINGTIN INTERACTING PROTEIN 1"/>
    <property type="match status" value="1"/>
</dbReference>
<dbReference type="PANTHER" id="PTHR10407:SF10">
    <property type="entry name" value="HUNTINGTIN-INTERACTING PROTEIN 1-RELATED PROTEIN"/>
    <property type="match status" value="1"/>
</dbReference>
<dbReference type="Pfam" id="PF07651">
    <property type="entry name" value="ANTH"/>
    <property type="match status" value="1"/>
</dbReference>
<dbReference type="Pfam" id="PF16515">
    <property type="entry name" value="HIP1_clath_bdg"/>
    <property type="match status" value="1"/>
</dbReference>
<dbReference type="Pfam" id="PF01608">
    <property type="entry name" value="I_LWEQ"/>
    <property type="match status" value="1"/>
</dbReference>
<dbReference type="SMART" id="SM00273">
    <property type="entry name" value="ENTH"/>
    <property type="match status" value="1"/>
</dbReference>
<dbReference type="SMART" id="SM00307">
    <property type="entry name" value="ILWEQ"/>
    <property type="match status" value="1"/>
</dbReference>
<dbReference type="SUPFAM" id="SSF48464">
    <property type="entry name" value="ENTH/VHS domain"/>
    <property type="match status" value="1"/>
</dbReference>
<dbReference type="SUPFAM" id="SSF109885">
    <property type="entry name" value="I/LWEQ domain"/>
    <property type="match status" value="1"/>
</dbReference>
<dbReference type="PROSITE" id="PS50942">
    <property type="entry name" value="ENTH"/>
    <property type="match status" value="1"/>
</dbReference>
<dbReference type="PROSITE" id="PS50945">
    <property type="entry name" value="I_LWEQ"/>
    <property type="match status" value="1"/>
</dbReference>
<reference key="1">
    <citation type="journal article" date="2000" name="Mamm. Genome">
        <title>HIP12 is a non-proapoptotic member of a gene family including HIP1, an interacting protein with huntingtin.</title>
        <authorList>
            <person name="Chopra V.S."/>
            <person name="Metzler M."/>
            <person name="Rasper D.M."/>
            <person name="Engqvist-Goldstein A.E.Y."/>
            <person name="Singaraja R."/>
            <person name="Gan L."/>
            <person name="Fichter K.M."/>
            <person name="McCutcheon K."/>
            <person name="Drubin D."/>
            <person name="Nicholson D.W."/>
            <person name="Hayden M.R."/>
        </authorList>
    </citation>
    <scope>NUCLEOTIDE SEQUENCE [MRNA] (ISOFORM 1)</scope>
</reference>
<reference key="2">
    <citation type="journal article" date="1998" name="DNA Res.">
        <title>Prediction of the coding sequences of unidentified human genes. X. The complete sequences of 100 new cDNA clones from brain which can code for large proteins in vitro.</title>
        <authorList>
            <person name="Ishikawa K."/>
            <person name="Nagase T."/>
            <person name="Suyama M."/>
            <person name="Miyajima N."/>
            <person name="Tanaka A."/>
            <person name="Kotani H."/>
            <person name="Nomura N."/>
            <person name="Ohara O."/>
        </authorList>
    </citation>
    <scope>NUCLEOTIDE SEQUENCE [LARGE SCALE MRNA] (ISOFORM 1)</scope>
    <source>
        <tissue>Brain</tissue>
    </source>
</reference>
<reference key="3">
    <citation type="journal article" date="2006" name="Nature">
        <title>The finished DNA sequence of human chromosome 12.</title>
        <authorList>
            <person name="Scherer S.E."/>
            <person name="Muzny D.M."/>
            <person name="Buhay C.J."/>
            <person name="Chen R."/>
            <person name="Cree A."/>
            <person name="Ding Y."/>
            <person name="Dugan-Rocha S."/>
            <person name="Gill R."/>
            <person name="Gunaratne P."/>
            <person name="Harris R.A."/>
            <person name="Hawes A.C."/>
            <person name="Hernandez J."/>
            <person name="Hodgson A.V."/>
            <person name="Hume J."/>
            <person name="Jackson A."/>
            <person name="Khan Z.M."/>
            <person name="Kovar-Smith C."/>
            <person name="Lewis L.R."/>
            <person name="Lozado R.J."/>
            <person name="Metzker M.L."/>
            <person name="Milosavljevic A."/>
            <person name="Miner G.R."/>
            <person name="Montgomery K.T."/>
            <person name="Morgan M.B."/>
            <person name="Nazareth L.V."/>
            <person name="Scott G."/>
            <person name="Sodergren E."/>
            <person name="Song X.-Z."/>
            <person name="Steffen D."/>
            <person name="Lovering R.C."/>
            <person name="Wheeler D.A."/>
            <person name="Worley K.C."/>
            <person name="Yuan Y."/>
            <person name="Zhang Z."/>
            <person name="Adams C.Q."/>
            <person name="Ansari-Lari M.A."/>
            <person name="Ayele M."/>
            <person name="Brown M.J."/>
            <person name="Chen G."/>
            <person name="Chen Z."/>
            <person name="Clerc-Blankenburg K.P."/>
            <person name="Davis C."/>
            <person name="Delgado O."/>
            <person name="Dinh H.H."/>
            <person name="Draper H."/>
            <person name="Gonzalez-Garay M.L."/>
            <person name="Havlak P."/>
            <person name="Jackson L.R."/>
            <person name="Jacob L.S."/>
            <person name="Kelly S.H."/>
            <person name="Li L."/>
            <person name="Li Z."/>
            <person name="Liu J."/>
            <person name="Liu W."/>
            <person name="Lu J."/>
            <person name="Maheshwari M."/>
            <person name="Nguyen B.-V."/>
            <person name="Okwuonu G.O."/>
            <person name="Pasternak S."/>
            <person name="Perez L.M."/>
            <person name="Plopper F.J.H."/>
            <person name="Santibanez J."/>
            <person name="Shen H."/>
            <person name="Tabor P.E."/>
            <person name="Verduzco D."/>
            <person name="Waldron L."/>
            <person name="Wang Q."/>
            <person name="Williams G.A."/>
            <person name="Zhang J."/>
            <person name="Zhou J."/>
            <person name="Allen C.C."/>
            <person name="Amin A.G."/>
            <person name="Anyalebechi V."/>
            <person name="Bailey M."/>
            <person name="Barbaria J.A."/>
            <person name="Bimage K.E."/>
            <person name="Bryant N.P."/>
            <person name="Burch P.E."/>
            <person name="Burkett C.E."/>
            <person name="Burrell K.L."/>
            <person name="Calderon E."/>
            <person name="Cardenas V."/>
            <person name="Carter K."/>
            <person name="Casias K."/>
            <person name="Cavazos I."/>
            <person name="Cavazos S.R."/>
            <person name="Ceasar H."/>
            <person name="Chacko J."/>
            <person name="Chan S.N."/>
            <person name="Chavez D."/>
            <person name="Christopoulos C."/>
            <person name="Chu J."/>
            <person name="Cockrell R."/>
            <person name="Cox C.D."/>
            <person name="Dang M."/>
            <person name="Dathorne S.R."/>
            <person name="David R."/>
            <person name="Davis C.M."/>
            <person name="Davy-Carroll L."/>
            <person name="Deshazo D.R."/>
            <person name="Donlin J.E."/>
            <person name="D'Souza L."/>
            <person name="Eaves K.A."/>
            <person name="Egan A."/>
            <person name="Emery-Cohen A.J."/>
            <person name="Escotto M."/>
            <person name="Flagg N."/>
            <person name="Forbes L.D."/>
            <person name="Gabisi A.M."/>
            <person name="Garza M."/>
            <person name="Hamilton C."/>
            <person name="Henderson N."/>
            <person name="Hernandez O."/>
            <person name="Hines S."/>
            <person name="Hogues M.E."/>
            <person name="Huang M."/>
            <person name="Idlebird D.G."/>
            <person name="Johnson R."/>
            <person name="Jolivet A."/>
            <person name="Jones S."/>
            <person name="Kagan R."/>
            <person name="King L.M."/>
            <person name="Leal B."/>
            <person name="Lebow H."/>
            <person name="Lee S."/>
            <person name="LeVan J.M."/>
            <person name="Lewis L.C."/>
            <person name="London P."/>
            <person name="Lorensuhewa L.M."/>
            <person name="Loulseged H."/>
            <person name="Lovett D.A."/>
            <person name="Lucier A."/>
            <person name="Lucier R.L."/>
            <person name="Ma J."/>
            <person name="Madu R.C."/>
            <person name="Mapua P."/>
            <person name="Martindale A.D."/>
            <person name="Martinez E."/>
            <person name="Massey E."/>
            <person name="Mawhiney S."/>
            <person name="Meador M.G."/>
            <person name="Mendez S."/>
            <person name="Mercado C."/>
            <person name="Mercado I.C."/>
            <person name="Merritt C.E."/>
            <person name="Miner Z.L."/>
            <person name="Minja E."/>
            <person name="Mitchell T."/>
            <person name="Mohabbat F."/>
            <person name="Mohabbat K."/>
            <person name="Montgomery B."/>
            <person name="Moore N."/>
            <person name="Morris S."/>
            <person name="Munidasa M."/>
            <person name="Ngo R.N."/>
            <person name="Nguyen N.B."/>
            <person name="Nickerson E."/>
            <person name="Nwaokelemeh O.O."/>
            <person name="Nwokenkwo S."/>
            <person name="Obregon M."/>
            <person name="Oguh M."/>
            <person name="Oragunye N."/>
            <person name="Oviedo R.J."/>
            <person name="Parish B.J."/>
            <person name="Parker D.N."/>
            <person name="Parrish J."/>
            <person name="Parks K.L."/>
            <person name="Paul H.A."/>
            <person name="Payton B.A."/>
            <person name="Perez A."/>
            <person name="Perrin W."/>
            <person name="Pickens A."/>
            <person name="Primus E.L."/>
            <person name="Pu L.-L."/>
            <person name="Puazo M."/>
            <person name="Quiles M.M."/>
            <person name="Quiroz J.B."/>
            <person name="Rabata D."/>
            <person name="Reeves K."/>
            <person name="Ruiz S.J."/>
            <person name="Shao H."/>
            <person name="Sisson I."/>
            <person name="Sonaike T."/>
            <person name="Sorelle R.P."/>
            <person name="Sutton A.E."/>
            <person name="Svatek A.F."/>
            <person name="Svetz L.A."/>
            <person name="Tamerisa K.S."/>
            <person name="Taylor T.R."/>
            <person name="Teague B."/>
            <person name="Thomas N."/>
            <person name="Thorn R.D."/>
            <person name="Trejos Z.Y."/>
            <person name="Trevino B.K."/>
            <person name="Ukegbu O.N."/>
            <person name="Urban J.B."/>
            <person name="Vasquez L.I."/>
            <person name="Vera V.A."/>
            <person name="Villasana D.M."/>
            <person name="Wang L."/>
            <person name="Ward-Moore S."/>
            <person name="Warren J.T."/>
            <person name="Wei X."/>
            <person name="White F."/>
            <person name="Williamson A.L."/>
            <person name="Wleczyk R."/>
            <person name="Wooden H.S."/>
            <person name="Wooden S.H."/>
            <person name="Yen J."/>
            <person name="Yoon L."/>
            <person name="Yoon V."/>
            <person name="Zorrilla S.E."/>
            <person name="Nelson D."/>
            <person name="Kucherlapati R."/>
            <person name="Weinstock G."/>
            <person name="Gibbs R.A."/>
        </authorList>
    </citation>
    <scope>NUCLEOTIDE SEQUENCE [LARGE SCALE GENOMIC DNA]</scope>
</reference>
<reference key="4">
    <citation type="journal article" date="2004" name="Genome Res.">
        <title>The status, quality, and expansion of the NIH full-length cDNA project: the Mammalian Gene Collection (MGC).</title>
        <authorList>
            <consortium name="The MGC Project Team"/>
        </authorList>
    </citation>
    <scope>NUCLEOTIDE SEQUENCE [LARGE SCALE MRNA] (ISOFORM 2)</scope>
    <scope>VARIANT SER-345</scope>
    <source>
        <tissue>Pancreas</tissue>
    </source>
</reference>
<reference key="5">
    <citation type="journal article" date="1998" name="J. Hum. Genet.">
        <title>Cloning, expression analysis, and chromosomal localization of HIP1R, an isolog of huntingtin interacting protein (HIP1).</title>
        <authorList>
            <person name="Seki N."/>
            <person name="Muramatsu M."/>
            <person name="Sugano S."/>
            <person name="Suzuki Y."/>
            <person name="Nakagawara A."/>
            <person name="Ohhira M."/>
            <person name="Hayashi A."/>
            <person name="Hori T."/>
            <person name="Saito T."/>
        </authorList>
    </citation>
    <scope>NUCLEOTIDE SEQUENCE [MRNA] OF 179-1068 (ISOFORM 1)</scope>
    <source>
        <tissue>Neuroblastoma</tissue>
    </source>
</reference>
<reference key="6">
    <citation type="journal article" date="2002" name="J. Biol. Chem.">
        <title>HIP1 and HIP12 display differential binding to F-actin, AP2, and clathrin. Identification of a novel interaction with clathrin light chain.</title>
        <authorList>
            <person name="Legendre-Guillemin V."/>
            <person name="Metzler M."/>
            <person name="Charbonneau M."/>
            <person name="Gan L."/>
            <person name="Chopra V."/>
            <person name="Philie J."/>
            <person name="Hayden M.R."/>
            <person name="McPherson P.S."/>
        </authorList>
    </citation>
    <scope>FUNCTION</scope>
    <scope>INTERACTION WITH CLTB AND HIP1</scope>
    <scope>SUBCELLULAR LOCATION</scope>
</reference>
<reference key="7">
    <citation type="journal article" date="2004" name="J. Biol. Chem.">
        <title>HIP1 and HIP1r stabilize receptor tyrosine kinases and bind 3-phosphoinositides via epsin N-terminal homology domains.</title>
        <authorList>
            <person name="Hyun T.S."/>
            <person name="Rao D.S."/>
            <person name="Saint-Dic D."/>
            <person name="Michael L.E."/>
            <person name="Kumar P.D."/>
            <person name="Bradley S.V."/>
            <person name="Mizukami I.F."/>
            <person name="Oravecz-Wilson K.I."/>
            <person name="Ross T.S."/>
        </authorList>
    </citation>
    <scope>FUNCTION</scope>
    <scope>SUBCELLULAR LOCATION</scope>
</reference>
<reference key="8">
    <citation type="journal article" date="2005" name="J. Biol. Chem.">
        <title>Huntingtin-interacting protein 1 (Hip1) and Hip1-related protein (Hip1R) bind the conserved sequence of clathrin light chains and thereby influence clathrin assembly in vitro and actin distribution in vivo.</title>
        <authorList>
            <person name="Chen C.-Y."/>
            <person name="Brodsky F.M."/>
        </authorList>
    </citation>
    <scope>INTERACTION WITH CLTB</scope>
</reference>
<reference key="9">
    <citation type="journal article" date="2008" name="Proc. Natl. Acad. Sci. U.S.A.">
        <title>A quantitative atlas of mitotic phosphorylation.</title>
        <authorList>
            <person name="Dephoure N."/>
            <person name="Zhou C."/>
            <person name="Villen J."/>
            <person name="Beausoleil S.A."/>
            <person name="Bakalarski C.E."/>
            <person name="Elledge S.J."/>
            <person name="Gygi S.P."/>
        </authorList>
    </citation>
    <scope>PHOSPHORYLATION [LARGE SCALE ANALYSIS] AT SER-1017</scope>
    <scope>IDENTIFICATION BY MASS SPECTROMETRY [LARGE SCALE ANALYSIS]</scope>
    <source>
        <tissue>Cervix carcinoma</tissue>
    </source>
</reference>
<reference key="10">
    <citation type="journal article" date="2009" name="Cell. Physiol. Biochem.">
        <title>HIP1R interacts with a member of Bcl-2 family, BCL2L10, and induces BAK-dependent cell death.</title>
        <authorList>
            <person name="Kim J.H."/>
            <person name="Yoon S."/>
            <person name="Won M."/>
            <person name="Sim S.H."/>
            <person name="Ko J.J."/>
            <person name="Han S."/>
            <person name="Lee K.A."/>
            <person name="Lee K."/>
            <person name="Bae J."/>
        </authorList>
    </citation>
    <scope>INTERACTION WITH BCL2L10</scope>
</reference>
<reference key="11">
    <citation type="journal article" date="2010" name="Sci. Signal.">
        <title>Quantitative phosphoproteomics reveals widespread full phosphorylation site occupancy during mitosis.</title>
        <authorList>
            <person name="Olsen J.V."/>
            <person name="Vermeulen M."/>
            <person name="Santamaria A."/>
            <person name="Kumar C."/>
            <person name="Miller M.L."/>
            <person name="Jensen L.J."/>
            <person name="Gnad F."/>
            <person name="Cox J."/>
            <person name="Jensen T.S."/>
            <person name="Nigg E.A."/>
            <person name="Brunak S."/>
            <person name="Mann M."/>
        </authorList>
    </citation>
    <scope>IDENTIFICATION BY MASS SPECTROMETRY [LARGE SCALE ANALYSIS]</scope>
    <source>
        <tissue>Cervix carcinoma</tissue>
    </source>
</reference>
<reference key="12">
    <citation type="journal article" date="2011" name="BMC Syst. Biol.">
        <title>Initial characterization of the human central proteome.</title>
        <authorList>
            <person name="Burkard T.R."/>
            <person name="Planyavsky M."/>
            <person name="Kaupe I."/>
            <person name="Breitwieser F.P."/>
            <person name="Buerckstuemmer T."/>
            <person name="Bennett K.L."/>
            <person name="Superti-Furga G."/>
            <person name="Colinge J."/>
        </authorList>
    </citation>
    <scope>IDENTIFICATION BY MASS SPECTROMETRY [LARGE SCALE ANALYSIS]</scope>
</reference>
<reference key="13">
    <citation type="journal article" date="2012" name="Proc. Natl. Acad. Sci. U.S.A.">
        <title>N-terminal acetylome analyses and functional insights of the N-terminal acetyltransferase NatB.</title>
        <authorList>
            <person name="Van Damme P."/>
            <person name="Lasa M."/>
            <person name="Polevoda B."/>
            <person name="Gazquez C."/>
            <person name="Elosegui-Artola A."/>
            <person name="Kim D.S."/>
            <person name="De Juan-Pardo E."/>
            <person name="Demeyer K."/>
            <person name="Hole K."/>
            <person name="Larrea E."/>
            <person name="Timmerman E."/>
            <person name="Prieto J."/>
            <person name="Arnesen T."/>
            <person name="Sherman F."/>
            <person name="Gevaert K."/>
            <person name="Aldabe R."/>
        </authorList>
    </citation>
    <scope>ACETYLATION [LARGE SCALE ANALYSIS] AT MET-1</scope>
    <scope>IDENTIFICATION BY MASS SPECTROMETRY [LARGE SCALE ANALYSIS]</scope>
</reference>
<reference key="14">
    <citation type="journal article" date="2014" name="J. Proteomics">
        <title>An enzyme assisted RP-RPLC approach for in-depth analysis of human liver phosphoproteome.</title>
        <authorList>
            <person name="Bian Y."/>
            <person name="Song C."/>
            <person name="Cheng K."/>
            <person name="Dong M."/>
            <person name="Wang F."/>
            <person name="Huang J."/>
            <person name="Sun D."/>
            <person name="Wang L."/>
            <person name="Ye M."/>
            <person name="Zou H."/>
        </authorList>
    </citation>
    <scope>IDENTIFICATION BY MASS SPECTROMETRY [LARGE SCALE ANALYSIS]</scope>
    <source>
        <tissue>Liver</tissue>
    </source>
</reference>
<reference key="15">
    <citation type="journal article" date="2006" name="Nat. Struct. Mol. Biol.">
        <title>Structural definition of the F-actin-binding THATCH domain from HIP1R.</title>
        <authorList>
            <person name="Brett T.J."/>
            <person name="Legendre-Guillemin V."/>
            <person name="McPherson P.S."/>
            <person name="Fremont D.H."/>
        </authorList>
    </citation>
    <scope>X-RAY CRYSTALLOGRAPHY (1.9 ANGSTROMS) OF 771-971</scope>
    <scope>PARTIAL PROTEIN SEQUENCE</scope>
    <scope>IDENTIFICATION BY MASS SPECTROMETRY</scope>
    <scope>SUBUNIT</scope>
    <scope>MUTAGENESIS OF ARG-867; GLY-871; ALA-875 AND 922-LYS--LYS-924</scope>
</reference>
<evidence type="ECO:0000250" key="1">
    <source>
        <dbReference type="UniProtKB" id="Q9JKY5"/>
    </source>
</evidence>
<evidence type="ECO:0000255" key="2"/>
<evidence type="ECO:0000255" key="3">
    <source>
        <dbReference type="PROSITE-ProRule" id="PRU00243"/>
    </source>
</evidence>
<evidence type="ECO:0000255" key="4">
    <source>
        <dbReference type="PROSITE-ProRule" id="PRU00292"/>
    </source>
</evidence>
<evidence type="ECO:0000256" key="5">
    <source>
        <dbReference type="SAM" id="MobiDB-lite"/>
    </source>
</evidence>
<evidence type="ECO:0000269" key="6">
    <source>
    </source>
</evidence>
<evidence type="ECO:0000269" key="7">
    <source>
    </source>
</evidence>
<evidence type="ECO:0000269" key="8">
    <source>
    </source>
</evidence>
<evidence type="ECO:0000269" key="9">
    <source>
    </source>
</evidence>
<evidence type="ECO:0000269" key="10">
    <source>
    </source>
</evidence>
<evidence type="ECO:0000269" key="11">
    <source>
    </source>
</evidence>
<evidence type="ECO:0000303" key="12">
    <source>
    </source>
</evidence>
<evidence type="ECO:0000305" key="13"/>
<evidence type="ECO:0007744" key="14">
    <source>
    </source>
</evidence>
<evidence type="ECO:0007744" key="15">
    <source>
    </source>
</evidence>
<evidence type="ECO:0007829" key="16">
    <source>
        <dbReference type="PDB" id="1R0D"/>
    </source>
</evidence>
<keyword id="KW-0002">3D-structure</keyword>
<keyword id="KW-0007">Acetylation</keyword>
<keyword id="KW-0009">Actin-binding</keyword>
<keyword id="KW-0025">Alternative splicing</keyword>
<keyword id="KW-0175">Coiled coil</keyword>
<keyword id="KW-0963">Cytoplasm</keyword>
<keyword id="KW-0968">Cytoplasmic vesicle</keyword>
<keyword id="KW-0903">Direct protein sequencing</keyword>
<keyword id="KW-0254">Endocytosis</keyword>
<keyword id="KW-0472">Membrane</keyword>
<keyword id="KW-0597">Phosphoprotein</keyword>
<keyword id="KW-1267">Proteomics identification</keyword>
<keyword id="KW-1185">Reference proteome</keyword>
<protein>
    <recommendedName>
        <fullName>Huntingtin-interacting protein 1-related protein</fullName>
        <shortName>HIP1-related protein</shortName>
    </recommendedName>
    <alternativeName>
        <fullName>Huntingtin-interacting protein 12</fullName>
        <shortName>HIP-12</shortName>
    </alternativeName>
</protein>
<feature type="chain" id="PRO_0000083984" description="Huntingtin-interacting protein 1-related protein">
    <location>
        <begin position="1"/>
        <end position="1068"/>
    </location>
</feature>
<feature type="domain" description="ENTH" evidence="3">
    <location>
        <begin position="23"/>
        <end position="151"/>
    </location>
</feature>
<feature type="domain" description="I/LWEQ" evidence="4">
    <location>
        <begin position="771"/>
        <end position="1012"/>
    </location>
</feature>
<feature type="region of interest" description="Disordered" evidence="5">
    <location>
        <begin position="424"/>
        <end position="443"/>
    </location>
</feature>
<feature type="region of interest" description="Disordered" evidence="5">
    <location>
        <begin position="529"/>
        <end position="549"/>
    </location>
</feature>
<feature type="region of interest" description="Disordered" evidence="5">
    <location>
        <begin position="582"/>
        <end position="608"/>
    </location>
</feature>
<feature type="region of interest" description="Important for actin binding">
    <location>
        <begin position="867"/>
        <end position="924"/>
    </location>
</feature>
<feature type="region of interest" description="Disordered" evidence="5">
    <location>
        <begin position="1016"/>
        <end position="1060"/>
    </location>
</feature>
<feature type="coiled-coil region" evidence="2">
    <location>
        <begin position="347"/>
        <end position="599"/>
    </location>
</feature>
<feature type="compositionally biased region" description="Basic and acidic residues" evidence="5">
    <location>
        <begin position="425"/>
        <end position="443"/>
    </location>
</feature>
<feature type="compositionally biased region" description="Basic and acidic residues" evidence="5">
    <location>
        <begin position="539"/>
        <end position="549"/>
    </location>
</feature>
<feature type="compositionally biased region" description="Low complexity" evidence="5">
    <location>
        <begin position="590"/>
        <end position="600"/>
    </location>
</feature>
<feature type="compositionally biased region" description="Basic and acidic residues" evidence="5">
    <location>
        <begin position="1049"/>
        <end position="1059"/>
    </location>
</feature>
<feature type="modified residue" description="N-acetylmethionine" evidence="15">
    <location>
        <position position="1"/>
    </location>
</feature>
<feature type="modified residue" description="Phosphoserine" evidence="14">
    <location>
        <position position="1017"/>
    </location>
</feature>
<feature type="splice variant" id="VSP_054238" description="In isoform 2." evidence="12">
    <original>ESQEQGLRQR</original>
    <variation>VWPPQMQQHH</variation>
    <location>
        <begin position="606"/>
        <end position="615"/>
    </location>
</feature>
<feature type="splice variant" id="VSP_054239" description="In isoform 2." evidence="12">
    <location>
        <begin position="616"/>
        <end position="1068"/>
    </location>
</feature>
<feature type="sequence variant" id="VAR_070814" description="In dbSNP:rs149504879." evidence="8">
    <original>N</original>
    <variation>S</variation>
    <location>
        <position position="345"/>
    </location>
</feature>
<feature type="sequence variant" id="VAR_051029" description="In dbSNP:rs7972242.">
    <original>K</original>
    <variation>Q</variation>
    <location>
        <position position="404"/>
    </location>
</feature>
<feature type="sequence variant" id="VAR_051030" description="In dbSNP:rs7972242.">
    <original>K</original>
    <variation>Q</variation>
    <location>
        <position position="516"/>
    </location>
</feature>
<feature type="sequence variant" id="VAR_020043" description="In dbSNP:rs2271051.">
    <original>V</original>
    <variation>M</variation>
    <location>
        <position position="782"/>
    </location>
</feature>
<feature type="sequence variant" id="VAR_051031" description="In dbSNP:rs3736414.">
    <original>N</original>
    <variation>S</variation>
    <location>
        <position position="943"/>
    </location>
</feature>
<feature type="mutagenesis site" description="Reduced acting binding." evidence="10">
    <original>R</original>
    <variation>D</variation>
    <location>
        <position position="867"/>
    </location>
</feature>
<feature type="mutagenesis site" description="Reduced acting binding." evidence="10">
    <original>G</original>
    <variation>D</variation>
    <location>
        <position position="871"/>
    </location>
</feature>
<feature type="mutagenesis site" description="Reduced acting binding." evidence="10">
    <original>A</original>
    <variation>D</variation>
    <location>
        <position position="875"/>
    </location>
</feature>
<feature type="mutagenesis site" description="Strongly reduced actin binding." evidence="10">
    <original>KVK</original>
    <variation>DDD</variation>
    <location>
        <begin position="922"/>
        <end position="924"/>
    </location>
</feature>
<feature type="helix" evidence="16">
    <location>
        <begin position="776"/>
        <end position="778"/>
    </location>
</feature>
<feature type="helix" evidence="16">
    <location>
        <begin position="779"/>
        <end position="811"/>
    </location>
</feature>
<feature type="helix" evidence="16">
    <location>
        <begin position="814"/>
        <end position="852"/>
    </location>
</feature>
<feature type="helix" evidence="16">
    <location>
        <begin position="858"/>
        <end position="864"/>
    </location>
</feature>
<feature type="helix" evidence="16">
    <location>
        <begin position="866"/>
        <end position="895"/>
    </location>
</feature>
<feature type="helix" evidence="16">
    <location>
        <begin position="900"/>
        <end position="922"/>
    </location>
</feature>
<feature type="turn" evidence="16">
    <location>
        <begin position="929"/>
        <end position="931"/>
    </location>
</feature>
<feature type="helix" evidence="16">
    <location>
        <begin position="932"/>
        <end position="964"/>
    </location>
</feature>
<comment type="function">
    <text evidence="6 7">Component of clathrin-coated pits and vesicles, that may link the endocytic machinery to the actin cytoskeleton. Binds 3-phosphoinositides (via ENTH domain). May act through the ENTH domain to promote cell survival by stabilizing receptor tyrosine kinases following ligand-induced endocytosis.</text>
</comment>
<comment type="subunit">
    <text evidence="1 6 9 10 11">Homodimer (By similarity). Interacts with actin; homodimerization promotes actin binding (PubMed:16415883). Interacts with CLTB (PubMed:11889126, PubMed:15533940). Interacts with HIP1 (PubMed:11889126). Interacts (via ENTH and I/LWEQ domains) with BCL2L10 (PubMed:19255499).</text>
</comment>
<comment type="interaction">
    <interactant intactId="EBI-4402639">
        <id>O75146</id>
    </interactant>
    <interactant intactId="EBI-4402639">
        <id>O75146</id>
        <label>HIP1R</label>
    </interactant>
    <organismsDiffer>false</organismsDiffer>
    <experiments>2</experiments>
</comment>
<comment type="interaction">
    <interactant intactId="EBI-12292427">
        <id>O75146-2</id>
    </interactant>
    <interactant intactId="EBI-715849">
        <id>O14777</id>
        <label>NDC80</label>
    </interactant>
    <organismsDiffer>false</organismsDiffer>
    <experiments>3</experiments>
</comment>
<comment type="interaction">
    <interactant intactId="EBI-12292427">
        <id>O75146-2</id>
    </interactant>
    <interactant intactId="EBI-1105213">
        <id>Q9UBB9</id>
        <label>TFIP11</label>
    </interactant>
    <organismsDiffer>false</organismsDiffer>
    <experiments>3</experiments>
</comment>
<comment type="interaction">
    <interactant intactId="EBI-12292427">
        <id>O75146-2</id>
    </interactant>
    <interactant intactId="EBI-719493">
        <id>P14373</id>
        <label>TRIM27</label>
    </interactant>
    <organismsDiffer>false</organismsDiffer>
    <experiments>3</experiments>
</comment>
<comment type="subcellular location">
    <subcellularLocation>
        <location>Cytoplasm</location>
        <location>Perinuclear region</location>
    </subcellularLocation>
    <subcellularLocation>
        <location>Endomembrane system</location>
    </subcellularLocation>
    <subcellularLocation>
        <location>Cytoplasmic vesicle</location>
        <location>Clathrin-coated vesicle membrane</location>
    </subcellularLocation>
    <text>Membrane-associated protein, mainly localized at the endocytic compartments and in the perinuclear region.</text>
</comment>
<comment type="alternative products">
    <event type="alternative splicing"/>
    <isoform>
        <id>O75146-1</id>
        <name>1</name>
        <sequence type="displayed"/>
    </isoform>
    <isoform>
        <id>O75146-2</id>
        <name>2</name>
        <sequence type="described" ref="VSP_054238 VSP_054239"/>
    </isoform>
</comment>
<comment type="tissue specificity">
    <text>Brain, heart, kidney, pancreas, and liver, but not in lung or placenta.</text>
</comment>
<comment type="domain">
    <text>Binds F-actin via the talin-like I/LWEQ domain.</text>
</comment>
<comment type="similarity">
    <text evidence="13">Belongs to the SLA2 family.</text>
</comment>
<comment type="sequence caution" evidence="13">
    <conflict type="erroneous initiation">
        <sequence resource="EMBL-CDS" id="BAA31630"/>
    </conflict>
</comment>
<accession>O75146</accession>
<accession>A6NHQ6</accession>
<accession>Q6NXG8</accession>
<accession>Q9UED9</accession>